<organism>
    <name type="scientific">Plasmodium vivax (strain Salvador I)</name>
    <dbReference type="NCBI Taxonomy" id="126793"/>
    <lineage>
        <taxon>Eukaryota</taxon>
        <taxon>Sar</taxon>
        <taxon>Alveolata</taxon>
        <taxon>Apicomplexa</taxon>
        <taxon>Aconoidasida</taxon>
        <taxon>Haemosporida</taxon>
        <taxon>Plasmodiidae</taxon>
        <taxon>Plasmodium</taxon>
        <taxon>Plasmodium (Plasmodium)</taxon>
    </lineage>
</organism>
<evidence type="ECO:0000255" key="1">
    <source>
        <dbReference type="HAMAP-Rule" id="MF_03115"/>
    </source>
</evidence>
<evidence type="ECO:0000256" key="2">
    <source>
        <dbReference type="SAM" id="MobiDB-lite"/>
    </source>
</evidence>
<comment type="function">
    <text evidence="1">Component of the cytosolic iron-sulfur (Fe-S) protein assembly (CIA) machinery. Required for the maturation of extramitochondrial Fe-S proteins. Part of an electron transfer chain functioning in an early step of cytosolic Fe-S biogenesis, facilitating the de novo assembly of a [4Fe-4S] cluster on the cytosolic Fe-S scaffold complex. Electrons are transferred from NADPH via a FAD- and FMN-containing diflavin oxidoreductase. Together with the diflavin oxidoreductase, also required for the assembly of the diferric tyrosyl radical cofactor of ribonucleotide reductase (RNR), probably by providing electrons for reduction during radical cofactor maturation in the catalytic small subunit.</text>
</comment>
<comment type="cofactor">
    <cofactor evidence="1">
        <name>[4Fe-4S] cluster</name>
        <dbReference type="ChEBI" id="CHEBI:49883"/>
    </cofactor>
</comment>
<comment type="subunit">
    <text evidence="1">Monomer.</text>
</comment>
<comment type="subcellular location">
    <subcellularLocation>
        <location evidence="1">Cytoplasm</location>
    </subcellularLocation>
    <subcellularLocation>
        <location evidence="1">Mitochondrion intermembrane space</location>
    </subcellularLocation>
</comment>
<comment type="domain">
    <text evidence="1">The C-terminal domain binds 2 Fe-S clusters but is otherwise mostly in an intrinsically disordered conformation.</text>
</comment>
<comment type="domain">
    <text evidence="1">The N-terminal domain has structural similarity with S-adenosyl-L-methionine-dependent methyltransferases, but does not bind S-adenosyl-L-methionine. It is required for correct assembly of the 2 Fe-S clusters.</text>
</comment>
<comment type="domain">
    <text evidence="1">The twin Cx2C motifs are involved in the recognition by the mitochondrial MIA40-ERV1 disulfide relay system. The formation of 2 disulfide bonds in the Cx2C motifs through dithiol/disulfide exchange reactions effectively traps the protein in the mitochondrial intermembrane space.</text>
</comment>
<comment type="similarity">
    <text evidence="1">Belongs to the anamorsin family.</text>
</comment>
<sequence>MMNFADTLVILNDDAPCELLRKKYAEMLVPTVSVSSFKRNKIYKTYNNVFLYTYREFDFLWDLDDNILHKVQRCLNKSGVLKLVLYISNTAGGDSQRHDEIAKRLKKECLYSGFINISNETNMAENGIIINVTAENPDFLSNEDDNDEHSSDGEAHENAEDNKKVVNRVCANCTCGKKANGVKLDTVAINEKEVQYLTENAVSSCGNCYLGDAFRCASCPYKGLPAFQPGENVKLNLDNEPN</sequence>
<dbReference type="EMBL" id="AAKM01000006">
    <property type="protein sequence ID" value="EDL45189.1"/>
    <property type="molecule type" value="Genomic_DNA"/>
</dbReference>
<dbReference type="RefSeq" id="XP_001614916.1">
    <property type="nucleotide sequence ID" value="XM_001614866.1"/>
</dbReference>
<dbReference type="SMR" id="A5K5K4"/>
<dbReference type="STRING" id="126793.A5K5K4"/>
<dbReference type="EnsemblProtists" id="EDL45189">
    <property type="protein sequence ID" value="EDL45189"/>
    <property type="gene ID" value="PVX_089130"/>
</dbReference>
<dbReference type="GeneID" id="5474207"/>
<dbReference type="KEGG" id="pvx:PVX_089130"/>
<dbReference type="VEuPathDB" id="PlasmoDB:PVX_089130"/>
<dbReference type="InParanoid" id="A5K5K4"/>
<dbReference type="OMA" id="PCELLRK"/>
<dbReference type="PhylomeDB" id="A5K5K4"/>
<dbReference type="Proteomes" id="UP000008333">
    <property type="component" value="Chromosome 5"/>
</dbReference>
<dbReference type="GO" id="GO:0005758">
    <property type="term" value="C:mitochondrial intermembrane space"/>
    <property type="evidence" value="ECO:0007669"/>
    <property type="project" value="UniProtKB-SubCell"/>
</dbReference>
<dbReference type="GO" id="GO:0051537">
    <property type="term" value="F:2 iron, 2 sulfur cluster binding"/>
    <property type="evidence" value="ECO:0007669"/>
    <property type="project" value="UniProtKB-UniRule"/>
</dbReference>
<dbReference type="GO" id="GO:0051539">
    <property type="term" value="F:4 iron, 4 sulfur cluster binding"/>
    <property type="evidence" value="ECO:0007669"/>
    <property type="project" value="UniProtKB-KW"/>
</dbReference>
<dbReference type="GO" id="GO:0009055">
    <property type="term" value="F:electron transfer activity"/>
    <property type="evidence" value="ECO:0007669"/>
    <property type="project" value="UniProtKB-UniRule"/>
</dbReference>
<dbReference type="GO" id="GO:0046872">
    <property type="term" value="F:metal ion binding"/>
    <property type="evidence" value="ECO:0007669"/>
    <property type="project" value="UniProtKB-KW"/>
</dbReference>
<dbReference type="GO" id="GO:0016226">
    <property type="term" value="P:iron-sulfur cluster assembly"/>
    <property type="evidence" value="ECO:0007669"/>
    <property type="project" value="UniProtKB-UniRule"/>
</dbReference>
<dbReference type="HAMAP" id="MF_03115">
    <property type="entry name" value="Anamorsin"/>
    <property type="match status" value="1"/>
</dbReference>
<dbReference type="InterPro" id="IPR007785">
    <property type="entry name" value="Anamorsin"/>
</dbReference>
<dbReference type="InterPro" id="IPR046408">
    <property type="entry name" value="CIAPIN1"/>
</dbReference>
<dbReference type="PANTHER" id="PTHR13273">
    <property type="entry name" value="ANAMORSIN"/>
    <property type="match status" value="1"/>
</dbReference>
<dbReference type="PANTHER" id="PTHR13273:SF14">
    <property type="entry name" value="ANAMORSIN"/>
    <property type="match status" value="1"/>
</dbReference>
<dbReference type="Pfam" id="PF05093">
    <property type="entry name" value="CIAPIN1"/>
    <property type="match status" value="1"/>
</dbReference>
<proteinExistence type="inferred from homology"/>
<feature type="chain" id="PRO_0000392358" description="Anamorsin homolog">
    <location>
        <begin position="1"/>
        <end position="242"/>
    </location>
</feature>
<feature type="region of interest" description="N-terminal SAM-like domain" evidence="1">
    <location>
        <begin position="1"/>
        <end position="140"/>
    </location>
</feature>
<feature type="region of interest" description="Disordered" evidence="2">
    <location>
        <begin position="140"/>
        <end position="159"/>
    </location>
</feature>
<feature type="region of interest" description="Linker" evidence="1">
    <location>
        <begin position="141"/>
        <end position="162"/>
    </location>
</feature>
<feature type="region of interest" description="Fe-S binding site B" evidence="1">
    <location>
        <begin position="205"/>
        <end position="219"/>
    </location>
</feature>
<feature type="short sequence motif" description="Cx2C motif 1" evidence="1">
    <location>
        <begin position="205"/>
        <end position="208"/>
    </location>
</feature>
<feature type="short sequence motif" description="Cx2C motif 2" evidence="1">
    <location>
        <begin position="216"/>
        <end position="219"/>
    </location>
</feature>
<feature type="compositionally biased region" description="Basic and acidic residues" evidence="2">
    <location>
        <begin position="148"/>
        <end position="159"/>
    </location>
</feature>
<feature type="binding site" evidence="1">
    <location>
        <position position="205"/>
    </location>
    <ligand>
        <name>[4Fe-4S] cluster</name>
        <dbReference type="ChEBI" id="CHEBI:49883"/>
    </ligand>
</feature>
<feature type="binding site" evidence="1">
    <location>
        <position position="208"/>
    </location>
    <ligand>
        <name>[4Fe-4S] cluster</name>
        <dbReference type="ChEBI" id="CHEBI:49883"/>
    </ligand>
</feature>
<feature type="binding site" evidence="1">
    <location>
        <position position="216"/>
    </location>
    <ligand>
        <name>[4Fe-4S] cluster</name>
        <dbReference type="ChEBI" id="CHEBI:49883"/>
    </ligand>
</feature>
<feature type="binding site" evidence="1">
    <location>
        <position position="219"/>
    </location>
    <ligand>
        <name>[4Fe-4S] cluster</name>
        <dbReference type="ChEBI" id="CHEBI:49883"/>
    </ligand>
</feature>
<reference key="1">
    <citation type="journal article" date="2008" name="Nature">
        <title>Comparative genomics of the neglected human malaria parasite Plasmodium vivax.</title>
        <authorList>
            <person name="Carlton J.M."/>
            <person name="Adams J.H."/>
            <person name="Silva J.C."/>
            <person name="Bidwell S.L."/>
            <person name="Lorenzi H."/>
            <person name="Caler E."/>
            <person name="Crabtree J."/>
            <person name="Angiuoli S.V."/>
            <person name="Merino E.F."/>
            <person name="Amedeo P."/>
            <person name="Cheng Q."/>
            <person name="Coulson R.M.R."/>
            <person name="Crabb B.S."/>
            <person name="del Portillo H.A."/>
            <person name="Essien K."/>
            <person name="Feldblyum T.V."/>
            <person name="Fernandez-Becerra C."/>
            <person name="Gilson P.R."/>
            <person name="Gueye A.H."/>
            <person name="Guo X."/>
            <person name="Kang'a S."/>
            <person name="Kooij T.W.A."/>
            <person name="Korsinczky M."/>
            <person name="Meyer E.V.-S."/>
            <person name="Nene V."/>
            <person name="Paulsen I."/>
            <person name="White O."/>
            <person name="Ralph S.A."/>
            <person name="Ren Q."/>
            <person name="Sargeant T.J."/>
            <person name="Salzberg S.L."/>
            <person name="Stoeckert C.J."/>
            <person name="Sullivan S.A."/>
            <person name="Yamamoto M.M."/>
            <person name="Hoffman S.L."/>
            <person name="Wortman J.R."/>
            <person name="Gardner M.J."/>
            <person name="Galinski M.R."/>
            <person name="Barnwell J.W."/>
            <person name="Fraser-Liggett C.M."/>
        </authorList>
    </citation>
    <scope>NUCLEOTIDE SEQUENCE [LARGE SCALE GENOMIC DNA]</scope>
    <source>
        <strain>Salvador I</strain>
    </source>
</reference>
<protein>
    <recommendedName>
        <fullName evidence="1">Anamorsin homolog</fullName>
    </recommendedName>
    <alternativeName>
        <fullName evidence="1">Fe-S cluster assembly protein DRE2 homolog</fullName>
    </alternativeName>
</protein>
<gene>
    <name type="ORF">PVX_089130</name>
</gene>
<name>DRE2_PLAVS</name>
<keyword id="KW-0004">4Fe-4S</keyword>
<keyword id="KW-0963">Cytoplasm</keyword>
<keyword id="KW-0408">Iron</keyword>
<keyword id="KW-0411">Iron-sulfur</keyword>
<keyword id="KW-0479">Metal-binding</keyword>
<keyword id="KW-0496">Mitochondrion</keyword>
<keyword id="KW-1185">Reference proteome</keyword>
<accession>A5K5K4</accession>